<evidence type="ECO:0000255" key="1">
    <source>
        <dbReference type="HAMAP-Rule" id="MF_01558"/>
    </source>
</evidence>
<evidence type="ECO:0000255" key="2">
    <source>
        <dbReference type="PROSITE-ProRule" id="PRU01083"/>
    </source>
</evidence>
<organism>
    <name type="scientific">Yersinia pseudotuberculosis serotype IB (strain PB1/+)</name>
    <dbReference type="NCBI Taxonomy" id="502801"/>
    <lineage>
        <taxon>Bacteria</taxon>
        <taxon>Pseudomonadati</taxon>
        <taxon>Pseudomonadota</taxon>
        <taxon>Gammaproteobacteria</taxon>
        <taxon>Enterobacterales</taxon>
        <taxon>Yersiniaceae</taxon>
        <taxon>Yersinia</taxon>
    </lineage>
</organism>
<comment type="function">
    <text evidence="1">This enzyme scavenges exogenous and endogenous cytidine and 2'-deoxycytidine for UMP synthesis.</text>
</comment>
<comment type="catalytic activity">
    <reaction evidence="1">
        <text>cytidine + H2O + H(+) = uridine + NH4(+)</text>
        <dbReference type="Rhea" id="RHEA:16069"/>
        <dbReference type="ChEBI" id="CHEBI:15377"/>
        <dbReference type="ChEBI" id="CHEBI:15378"/>
        <dbReference type="ChEBI" id="CHEBI:16704"/>
        <dbReference type="ChEBI" id="CHEBI:17562"/>
        <dbReference type="ChEBI" id="CHEBI:28938"/>
        <dbReference type="EC" id="3.5.4.5"/>
    </reaction>
</comment>
<comment type="catalytic activity">
    <reaction evidence="1">
        <text>2'-deoxycytidine + H2O + H(+) = 2'-deoxyuridine + NH4(+)</text>
        <dbReference type="Rhea" id="RHEA:13433"/>
        <dbReference type="ChEBI" id="CHEBI:15377"/>
        <dbReference type="ChEBI" id="CHEBI:15378"/>
        <dbReference type="ChEBI" id="CHEBI:15698"/>
        <dbReference type="ChEBI" id="CHEBI:16450"/>
        <dbReference type="ChEBI" id="CHEBI:28938"/>
        <dbReference type="EC" id="3.5.4.5"/>
    </reaction>
</comment>
<comment type="cofactor">
    <cofactor evidence="1">
        <name>Zn(2+)</name>
        <dbReference type="ChEBI" id="CHEBI:29105"/>
    </cofactor>
    <text evidence="1">Binds 1 zinc ion.</text>
</comment>
<comment type="subunit">
    <text evidence="1">Homodimer.</text>
</comment>
<comment type="similarity">
    <text evidence="1">Belongs to the cytidine and deoxycytidylate deaminase family.</text>
</comment>
<reference key="1">
    <citation type="submission" date="2008-04" db="EMBL/GenBank/DDBJ databases">
        <title>Complete sequence of Yersinia pseudotuberculosis PB1/+.</title>
        <authorList>
            <person name="Copeland A."/>
            <person name="Lucas S."/>
            <person name="Lapidus A."/>
            <person name="Glavina del Rio T."/>
            <person name="Dalin E."/>
            <person name="Tice H."/>
            <person name="Bruce D."/>
            <person name="Goodwin L."/>
            <person name="Pitluck S."/>
            <person name="Munk A.C."/>
            <person name="Brettin T."/>
            <person name="Detter J.C."/>
            <person name="Han C."/>
            <person name="Tapia R."/>
            <person name="Schmutz J."/>
            <person name="Larimer F."/>
            <person name="Land M."/>
            <person name="Hauser L."/>
            <person name="Challacombe J.F."/>
            <person name="Green L."/>
            <person name="Lindler L.E."/>
            <person name="Nikolich M.P."/>
            <person name="Richardson P."/>
        </authorList>
    </citation>
    <scope>NUCLEOTIDE SEQUENCE [LARGE SCALE GENOMIC DNA]</scope>
    <source>
        <strain>PB1/+</strain>
    </source>
</reference>
<dbReference type="EC" id="3.5.4.5" evidence="1"/>
<dbReference type="EMBL" id="CP001048">
    <property type="protein sequence ID" value="ACC88606.1"/>
    <property type="molecule type" value="Genomic_DNA"/>
</dbReference>
<dbReference type="RefSeq" id="WP_011192106.1">
    <property type="nucleotide sequence ID" value="NZ_CP009780.1"/>
</dbReference>
<dbReference type="SMR" id="B2JZJ6"/>
<dbReference type="KEGG" id="ypb:YPTS_1637"/>
<dbReference type="PATRIC" id="fig|502801.10.peg.1007"/>
<dbReference type="GO" id="GO:0005829">
    <property type="term" value="C:cytosol"/>
    <property type="evidence" value="ECO:0007669"/>
    <property type="project" value="TreeGrafter"/>
</dbReference>
<dbReference type="GO" id="GO:0004126">
    <property type="term" value="F:cytidine deaminase activity"/>
    <property type="evidence" value="ECO:0007669"/>
    <property type="project" value="UniProtKB-UniRule"/>
</dbReference>
<dbReference type="GO" id="GO:0042802">
    <property type="term" value="F:identical protein binding"/>
    <property type="evidence" value="ECO:0007669"/>
    <property type="project" value="UniProtKB-ARBA"/>
</dbReference>
<dbReference type="GO" id="GO:0008270">
    <property type="term" value="F:zinc ion binding"/>
    <property type="evidence" value="ECO:0007669"/>
    <property type="project" value="UniProtKB-UniRule"/>
</dbReference>
<dbReference type="GO" id="GO:0009972">
    <property type="term" value="P:cytidine deamination"/>
    <property type="evidence" value="ECO:0007669"/>
    <property type="project" value="InterPro"/>
</dbReference>
<dbReference type="CDD" id="cd01283">
    <property type="entry name" value="cytidine_deaminase"/>
    <property type="match status" value="2"/>
</dbReference>
<dbReference type="FunFam" id="3.40.140.10:FF:000006">
    <property type="entry name" value="Cytidine deaminase"/>
    <property type="match status" value="1"/>
</dbReference>
<dbReference type="FunFam" id="3.40.140.10:FF:000007">
    <property type="entry name" value="Cytidine deaminase"/>
    <property type="match status" value="1"/>
</dbReference>
<dbReference type="Gene3D" id="3.40.140.10">
    <property type="entry name" value="Cytidine Deaminase, domain 2"/>
    <property type="match status" value="2"/>
</dbReference>
<dbReference type="HAMAP" id="MF_01558">
    <property type="entry name" value="Cyt_deam"/>
    <property type="match status" value="1"/>
</dbReference>
<dbReference type="InterPro" id="IPR016192">
    <property type="entry name" value="APOBEC/CMP_deaminase_Zn-bd"/>
</dbReference>
<dbReference type="InterPro" id="IPR002125">
    <property type="entry name" value="CMP_dCMP_dom"/>
</dbReference>
<dbReference type="InterPro" id="IPR013171">
    <property type="entry name" value="Cyd/dCyd_deaminase_Zn-bd"/>
</dbReference>
<dbReference type="InterPro" id="IPR050202">
    <property type="entry name" value="Cyt/Deoxycyt_deaminase"/>
</dbReference>
<dbReference type="InterPro" id="IPR006263">
    <property type="entry name" value="Cyt_deam_dimer"/>
</dbReference>
<dbReference type="InterPro" id="IPR016193">
    <property type="entry name" value="Cytidine_deaminase-like"/>
</dbReference>
<dbReference type="InterPro" id="IPR020797">
    <property type="entry name" value="Cytidine_deaminase_bacteria"/>
</dbReference>
<dbReference type="NCBIfam" id="TIGR01355">
    <property type="entry name" value="cyt_deam_dimer"/>
    <property type="match status" value="1"/>
</dbReference>
<dbReference type="NCBIfam" id="NF006537">
    <property type="entry name" value="PRK09027.1"/>
    <property type="match status" value="1"/>
</dbReference>
<dbReference type="PANTHER" id="PTHR11644">
    <property type="entry name" value="CYTIDINE DEAMINASE"/>
    <property type="match status" value="1"/>
</dbReference>
<dbReference type="PANTHER" id="PTHR11644:SF2">
    <property type="entry name" value="CYTIDINE DEAMINASE"/>
    <property type="match status" value="1"/>
</dbReference>
<dbReference type="Pfam" id="PF00383">
    <property type="entry name" value="dCMP_cyt_deam_1"/>
    <property type="match status" value="1"/>
</dbReference>
<dbReference type="Pfam" id="PF08211">
    <property type="entry name" value="dCMP_cyt_deam_2"/>
    <property type="match status" value="1"/>
</dbReference>
<dbReference type="PIRSF" id="PIRSF006334">
    <property type="entry name" value="Cdd_plus_pseudo"/>
    <property type="match status" value="1"/>
</dbReference>
<dbReference type="SUPFAM" id="SSF53927">
    <property type="entry name" value="Cytidine deaminase-like"/>
    <property type="match status" value="2"/>
</dbReference>
<dbReference type="PROSITE" id="PS00903">
    <property type="entry name" value="CYT_DCMP_DEAMINASES_1"/>
    <property type="match status" value="1"/>
</dbReference>
<dbReference type="PROSITE" id="PS51747">
    <property type="entry name" value="CYT_DCMP_DEAMINASES_2"/>
    <property type="match status" value="2"/>
</dbReference>
<name>CDD_YERPB</name>
<protein>
    <recommendedName>
        <fullName evidence="1">Cytidine deaminase</fullName>
        <ecNumber evidence="1">3.5.4.5</ecNumber>
    </recommendedName>
    <alternativeName>
        <fullName evidence="1">Cytidine aminohydrolase</fullName>
        <shortName evidence="1">CDA</shortName>
    </alternativeName>
</protein>
<keyword id="KW-0378">Hydrolase</keyword>
<keyword id="KW-0479">Metal-binding</keyword>
<keyword id="KW-0862">Zinc</keyword>
<proteinExistence type="inferred from homology"/>
<sequence>MQARFHTSWAELPASLQFALEPILSAENFPAMLTAEQVKTVKNISGLDDDALAFALLPLATACALTPISHFNVGAIARGKSGNFYFGANMEFRGVPLQQTIHAEQCAVTHAWLRGETNLVAITVNYTPCGHCRQFMNELNCGSELHIHLPGRPPSTLGQYLPDSFGPTDLAITTLLMDPVNHGYTLAETDPLTQAALNAANHSHAPYSQSHSGVALETTNGKIYAGRYAENAAFNPSLPPLQAALILANITGENCASIRRAVLVEGHNAVTSQWDTTLATLNALGCSAVKRVTF</sequence>
<feature type="chain" id="PRO_1000147119" description="Cytidine deaminase">
    <location>
        <begin position="1"/>
        <end position="294"/>
    </location>
</feature>
<feature type="domain" description="CMP/dCMP-type deaminase 1" evidence="2">
    <location>
        <begin position="48"/>
        <end position="168"/>
    </location>
</feature>
<feature type="domain" description="CMP/dCMP-type deaminase 2" evidence="2">
    <location>
        <begin position="187"/>
        <end position="294"/>
    </location>
</feature>
<feature type="active site" description="Proton donor" evidence="1">
    <location>
        <position position="104"/>
    </location>
</feature>
<feature type="binding site" evidence="1">
    <location>
        <begin position="89"/>
        <end position="91"/>
    </location>
    <ligand>
        <name>substrate</name>
    </ligand>
</feature>
<feature type="binding site" evidence="1">
    <location>
        <position position="102"/>
    </location>
    <ligand>
        <name>Zn(2+)</name>
        <dbReference type="ChEBI" id="CHEBI:29105"/>
        <note>catalytic</note>
    </ligand>
</feature>
<feature type="binding site" evidence="1">
    <location>
        <position position="129"/>
    </location>
    <ligand>
        <name>Zn(2+)</name>
        <dbReference type="ChEBI" id="CHEBI:29105"/>
        <note>catalytic</note>
    </ligand>
</feature>
<feature type="binding site" evidence="1">
    <location>
        <position position="132"/>
    </location>
    <ligand>
        <name>Zn(2+)</name>
        <dbReference type="ChEBI" id="CHEBI:29105"/>
        <note>catalytic</note>
    </ligand>
</feature>
<accession>B2JZJ6</accession>
<gene>
    <name evidence="1" type="primary">cdd</name>
    <name type="ordered locus">YPTS_1637</name>
</gene>